<sequence length="3093" mass="350686">MVFESVVVDVLNRFLGDYVVDLDTSQLSLGIWKGAVALKNLQIKENALSQLDVPFKVKVGHIGNLKLIIPWKNLYSQPVEAVLEEIYLLIVPSSRIKYDPIKEEKQLMEAKQQELKRIEEAKQKVVDQEQHLLEKQDTFAEKLVTQIIKNLQVKISSIHIRYEDDITNRDKPLSFGISLQNLSMQTTDQYWVPCLHDETEKLVRKLIRLDNLFAYWNVKSQMFYLNDYDDSLDDLRNGIVNENIVPEGYDFVFRPISANAKLVMNRRSDFDFSAPKINLDVELHNIAIEFNKPQYFSIMELLESVDMMTQNMPYRKFRPDVPLHHHAREWWAYAIHGVLEVNVCPRLRMWSWKHIRKHRGKMKQYKELYKKKLTSKKPPGELLVSLEELEKTLDVLNITIARQQAEVEVKKAGYKIYKEGVKDPEDNKGWFSWLWSWSEQNTNEQQPDVKPGILEEMLTPEEKALLYEAIGYSETAVDPTLPKTFEALKFFVHLKSMSVVLRENHQKPELIDIVIEEFSTLIVQRPGAQAVKFETKIDSFHITGLPDNSEKPRLLSSLDDAMSLFQITFEINPLDETVTQRCIIEAEPLEIIYDARTVNSIVEFFRPPKEVHLAQLTSATLTKLEEFRNKTATGLLYIIETQKVLDLRINLKASYIIVPQDGIFSPTSNLLLLDLGHLKVTSKSRSELPDVKQGEANLKEIMDIAYDSFDIQLTSIQLLYSRVGDNWREARKLNVSTQHILVPMHFNLELSKAMVFMDVRMPKFKIFGKLPLISLRISDKKLQGIMELVESIPKPEPVTEVSAPVKSFQIQTSTSLGTSQISQKIIPLLELPSVSEDDSEEEFFDAPCSPLDEPLQFPTGVKSIRTRKLQKQDCSVNMTTFKIRFEVPKVLIEFYHLVGDCELSVVEIHVLGLGTEIEIRTYDLKANAFLKEFCLKCPEYLDENRKPVYLVTTLDNTMEDLLTLEYVKAEKNVPNLKSTYNNVLQLIKVNFSSLDIHLHTEALLNTINYLHNILPQSEEKSAPVSTTETEDKGDVIKKLALKLSTNEDIITLQILAELSCLQIFIQDQKRNISEIKIEGLDSEMIMRPSETEINAKLRNIIVLDSDITAIYKKAVYITGKEVFSFKMVSYMDATAGSAYTDMNVVDIQVNLVVGCIEVVFVTKFLCSILAFIDNFQAAKQALAEATVQAAGMAATGVKELARRSSRMALDINIKAPVVVIPQSPVSENVFVADFGLITMTNTFHMITESQSSPPPVIDLITIKLSEMRLYRSQFINDAYQEVLDLLLPLNLEVVVERNLCWEWYQEVPCFNVNAQLKPMEFILSQEDITTIFKTLHGNIWYEKDGSASPAVTKDQYSATSGVTTNASHHSGGATVVTAAVVEVHSRASLVKTTLNVSFKTDYLTMVLYSPGPKQASFTDVRDPSLKLAEFKLENIISTLKMYTDDSTFSSFSLKNCILDDKRPHVKKATPRMIGLTVGFDKKDMMDIKYRKVRDGCVTDAVFQEMYICASVEFLQTVANVFLEAYTTGTAVETSVQTWTAKEEVPTQELEKWEINVIIKNPEIVFVADMTKNDAPALVITTQCEICYKGNLENSTMTAAIKDLQVRACPFLPIKRKGKVTTVLQPCDLFYQTTQAGTDPQVIDMSVKSLTLKVSPVIINTMITITSALYTTKETIPEETASSTAQLWEKKDTKTLKMWFLEESNETEKIAPTTELIPKGEMIKMNIDSIFIVLEAGIGHRTVPMLLAKSRFSGEGKNWSSLINLHCQLELEVHYYNEMFGVWEPLLEPLEIDQTEDFRPWNLGIKMKKKAKKAIVESDPEEENYKVPEYKTVISFHSKDQLNITLSKCGLVMLNNLAKAFTEAATGSSADFVKDLAPFIILNSLGLTISVSPSDSFSVLNIPMAKSYVLKNEESLSMDYVRTKDNDHFNAMTSLSSKLFFILLTPVNHSTADKIPLTKVGRRLYTVRHRESGVERSIVCQIDTVEGSKKVTIRSPVQIRNHFSVPLSVYEGDTLLGTASPENEFNIPLGSYRSFLFLKPEDEDYQRCEGIDFEEIVKNDGALLKKKCRSQNPSKKSFLINIVPEKDNLTSLSVYSEDGWDLPYIMHLWPPILLRNLLPYKIAYYIEGIENSVFTLSEGHSAQICTVQLDKARLRLKLLDYLNHDWKSEYHIKPNQQDISFVNFTCITEMEKTDLDIAVHMTYNTGQTVVAFHSPYWMVNKTGRMLQYKADGIHRKHPPNYKKPVLFSFQPNHFFNNNKVQLMVTDSELSDQFSIDTVGSHGAVKCKGLKMDYQVGVTIDLSSFNITRIVTFTPFYMIKNKSKYRISVAEEGTDKWLSLDLEQCIPFWPEDASSKLLIQVEGSEDPPKRIYFNKQENCILLRLDNELGGIIAEVNLAEHSTVITFLDYHDGAATFLLINHTKNELVQYNQSSLSEIEDSLPPGKAVFYTWADPVGSRRLKWRCRKSHGEVTQKDDMMMPIDLGKKTIYLVSFFEGLQRIILFTEDPKVFKVTYESEKAELAEQEIAVALQDVGISLVNNYTKQEVAYIGITSSDVVWETKPKKKARWKPMSVKHTEKLEREFKEYTESSPSEDKVIELDTNIPVRLTPTGHNMKILQPRVIALRRNYLPALKVEYNTSAHQSSFRIQIYRIQIQNQIHGAVFPFVFYPVKPPKSVTMDSAPKPFTDVSIVMRSAGHSQISRIKYFKVLIQEMDLRLDLGFIYALTDLMTEAEVTENTEVELFHKDIEAFKEEYKTASLVDQSQVSLYEYFHISPLKLHLSVSLSSGGEEAKDSKQNGGLIPVHSLNLLLKSIGATLTDVQDVVFKLAFFELNYQFHTTSDLQSEVIRHYSKQAIKQMYVLILGLDVLGNPFGLIREFSEGVEAFFYEPYQGAIQGPEEFVEGMALGLKALVGGAVGGLAGAASKITGAMAKGVAAMTMDEDYQQKRREAMNKQPAGFREGITRGGKGLVSGFVSGITGIVTKPIKGAQKEGAAGFFKGVGKGLVGAVARPTGGIIDMASSTFQGIKRATETSEVESLRPPRFFNEDGVIRPYRLRDGTGNQMLQKIQFCREWIMTHSSSSDDDDGDDDESDLNR</sequence>
<reference key="1">
    <citation type="submission" date="2013-03" db="EMBL/GenBank/DDBJ databases">
        <authorList>
            <person name="Warren W."/>
            <person name="Wilson R.K."/>
        </authorList>
    </citation>
    <scope>NUCLEOTIDE SEQUENCE [MRNA]</scope>
</reference>
<reference key="2">
    <citation type="submission" date="2001-02" db="EMBL/GenBank/DDBJ databases">
        <title>Isolation of full-length cDNA clones from macaque brain cDNA libraries.</title>
        <authorList>
            <person name="Osada N."/>
            <person name="Hida M."/>
            <person name="Kusuda J."/>
            <person name="Tanuma R."/>
            <person name="Iseki K."/>
            <person name="Hirai M."/>
            <person name="Terao K."/>
            <person name="Suzuki Y."/>
            <person name="Sugano S."/>
            <person name="Hashimoto K."/>
        </authorList>
    </citation>
    <scope>NUCLEOTIDE SEQUENCE [LARGE SCALE MRNA] OF 2475-3093</scope>
    <source>
        <tissue>Frontal cortex</tissue>
    </source>
</reference>
<comment type="function">
    <text evidence="1 3">Mediates the transfer of lipids between membranes at organelle contact sites (By similarity). Required for the formation or stabilization of ER-mitochondria contact sites which enable transfer of lipids between the ER and mitochondria (By similarity). Negatively regulates lipid droplet size and motility (By similarity). Required for efficient lysosomal protein degradation (By similarity).</text>
</comment>
<comment type="subunit">
    <text evidence="3">Interacts (via FFAT motif) with VAPA and VAPB (By similarity). Interacts with RAB7A (By similarity). Interacts with XK (By similarity).</text>
</comment>
<comment type="subcellular location">
    <subcellularLocation>
        <location evidence="3">Mitochondrion outer membrane</location>
        <topology evidence="3">Peripheral membrane protein</topology>
    </subcellularLocation>
    <subcellularLocation>
        <location evidence="3">Endoplasmic reticulum membrane</location>
        <topology evidence="3">Peripheral membrane protein</topology>
    </subcellularLocation>
    <subcellularLocation>
        <location evidence="3">Endosome membrane</location>
        <topology evidence="3">Peripheral membrane protein</topology>
    </subcellularLocation>
    <subcellularLocation>
        <location evidence="3">Lysosome membrane</location>
        <topology evidence="3">Peripheral membrane protein</topology>
    </subcellularLocation>
    <subcellularLocation>
        <location evidence="3">Lipid droplet</location>
    </subcellularLocation>
    <subcellularLocation>
        <location evidence="2">Golgi apparatus</location>
    </subcellularLocation>
    <subcellularLocation>
        <location evidence="2">Cytoplasmic vesicle</location>
        <location evidence="2">Secretory vesicle</location>
        <location evidence="2">Neuronal dense core vesicle</location>
    </subcellularLocation>
    <text evidence="3">Localizes at mitochondria-endosomes and mitochondria-endoplasmic reticulum contact sites.</text>
</comment>
<comment type="domain">
    <text evidence="3">The FFAT motif is required for interaction with VAPA and VAPB and its localization to the endoplasmic reticulum.</text>
</comment>
<comment type="similarity">
    <text evidence="5">Belongs to the VPS13 family.</text>
</comment>
<keyword id="KW-0968">Cytoplasmic vesicle</keyword>
<keyword id="KW-0256">Endoplasmic reticulum</keyword>
<keyword id="KW-0967">Endosome</keyword>
<keyword id="KW-0333">Golgi apparatus</keyword>
<keyword id="KW-0551">Lipid droplet</keyword>
<keyword id="KW-0445">Lipid transport</keyword>
<keyword id="KW-0458">Lysosome</keyword>
<keyword id="KW-0472">Membrane</keyword>
<keyword id="KW-0496">Mitochondrion</keyword>
<keyword id="KW-1000">Mitochondrion outer membrane</keyword>
<keyword id="KW-0597">Phosphoprotein</keyword>
<keyword id="KW-1185">Reference proteome</keyword>
<keyword id="KW-0677">Repeat</keyword>
<keyword id="KW-0802">TPR repeat</keyword>
<keyword id="KW-0813">Transport</keyword>
<dbReference type="EMBL" id="AB055267">
    <property type="protein sequence ID" value="BAB21891.1"/>
    <property type="molecule type" value="mRNA"/>
</dbReference>
<dbReference type="SMR" id="Q9BGZ0"/>
<dbReference type="STRING" id="9541.ENSMFAP00000008576"/>
<dbReference type="Ensembl" id="ENSMFAT00000021483.2">
    <property type="protein sequence ID" value="ENSMFAP00000008576.2"/>
    <property type="gene ID" value="ENSMFAG00000001206.2"/>
</dbReference>
<dbReference type="VEuPathDB" id="HostDB:ENSMFAG00000001206"/>
<dbReference type="eggNOG" id="KOG1809">
    <property type="taxonomic scope" value="Eukaryota"/>
</dbReference>
<dbReference type="GeneTree" id="ENSGT00950000183083"/>
<dbReference type="Proteomes" id="UP000233100">
    <property type="component" value="Chromosome 15"/>
</dbReference>
<dbReference type="Bgee" id="ENSMFAG00000001206">
    <property type="expression patterns" value="Expressed in skeletal muscle tissue and 13 other cell types or tissues"/>
</dbReference>
<dbReference type="GO" id="GO:0005789">
    <property type="term" value="C:endoplasmic reticulum membrane"/>
    <property type="evidence" value="ECO:0000250"/>
    <property type="project" value="UniProtKB"/>
</dbReference>
<dbReference type="GO" id="GO:0010008">
    <property type="term" value="C:endosome membrane"/>
    <property type="evidence" value="ECO:0000250"/>
    <property type="project" value="UniProtKB"/>
</dbReference>
<dbReference type="GO" id="GO:0005794">
    <property type="term" value="C:Golgi apparatus"/>
    <property type="evidence" value="ECO:0000250"/>
    <property type="project" value="UniProtKB"/>
</dbReference>
<dbReference type="GO" id="GO:0005811">
    <property type="term" value="C:lipid droplet"/>
    <property type="evidence" value="ECO:0000250"/>
    <property type="project" value="UniProtKB"/>
</dbReference>
<dbReference type="GO" id="GO:0005765">
    <property type="term" value="C:lysosomal membrane"/>
    <property type="evidence" value="ECO:0000250"/>
    <property type="project" value="UniProtKB"/>
</dbReference>
<dbReference type="GO" id="GO:0044233">
    <property type="term" value="C:mitochondria-associated endoplasmic reticulum membrane contact site"/>
    <property type="evidence" value="ECO:0000250"/>
    <property type="project" value="UniProtKB"/>
</dbReference>
<dbReference type="GO" id="GO:0031966">
    <property type="term" value="C:mitochondrial membrane"/>
    <property type="evidence" value="ECO:0000250"/>
    <property type="project" value="UniProtKB"/>
</dbReference>
<dbReference type="GO" id="GO:0005741">
    <property type="term" value="C:mitochondrial outer membrane"/>
    <property type="evidence" value="ECO:0000250"/>
    <property type="project" value="UniProtKB"/>
</dbReference>
<dbReference type="GO" id="GO:0099013">
    <property type="term" value="C:neuronal dense core vesicle lumen"/>
    <property type="evidence" value="ECO:0000250"/>
    <property type="project" value="UniProtKB"/>
</dbReference>
<dbReference type="GO" id="GO:0006914">
    <property type="term" value="P:autophagy"/>
    <property type="evidence" value="ECO:0007669"/>
    <property type="project" value="TreeGrafter"/>
</dbReference>
<dbReference type="GO" id="GO:0006869">
    <property type="term" value="P:lipid transport"/>
    <property type="evidence" value="ECO:0007669"/>
    <property type="project" value="UniProtKB-KW"/>
</dbReference>
<dbReference type="GO" id="GO:1905146">
    <property type="term" value="P:lysosomal protein catabolic process"/>
    <property type="evidence" value="ECO:0000250"/>
    <property type="project" value="UniProtKB"/>
</dbReference>
<dbReference type="GO" id="GO:0045053">
    <property type="term" value="P:protein retention in Golgi apparatus"/>
    <property type="evidence" value="ECO:0007669"/>
    <property type="project" value="TreeGrafter"/>
</dbReference>
<dbReference type="GO" id="GO:0006623">
    <property type="term" value="P:protein targeting to vacuole"/>
    <property type="evidence" value="ECO:0007669"/>
    <property type="project" value="TreeGrafter"/>
</dbReference>
<dbReference type="InterPro" id="IPR026847">
    <property type="entry name" value="VPS13"/>
</dbReference>
<dbReference type="InterPro" id="IPR056748">
    <property type="entry name" value="VPS13-like_C"/>
</dbReference>
<dbReference type="InterPro" id="IPR056747">
    <property type="entry name" value="VPS13-like_M"/>
</dbReference>
<dbReference type="InterPro" id="IPR026854">
    <property type="entry name" value="VPS13_N"/>
</dbReference>
<dbReference type="InterPro" id="IPR009543">
    <property type="entry name" value="VPS13_VAB"/>
</dbReference>
<dbReference type="PANTHER" id="PTHR16166:SF22">
    <property type="entry name" value="INTERMEMBRANE LIPID TRANSFER PROTEIN VPS13A"/>
    <property type="match status" value="1"/>
</dbReference>
<dbReference type="PANTHER" id="PTHR16166">
    <property type="entry name" value="VACUOLAR PROTEIN SORTING-ASSOCIATED PROTEIN VPS13"/>
    <property type="match status" value="1"/>
</dbReference>
<dbReference type="Pfam" id="PF25037">
    <property type="entry name" value="VPS13_C"/>
    <property type="match status" value="1"/>
</dbReference>
<dbReference type="Pfam" id="PF25033">
    <property type="entry name" value="VPS13_M"/>
    <property type="match status" value="1"/>
</dbReference>
<dbReference type="Pfam" id="PF12624">
    <property type="entry name" value="VPS13_N"/>
    <property type="match status" value="1"/>
</dbReference>
<dbReference type="Pfam" id="PF25036">
    <property type="entry name" value="VPS13_VAB"/>
    <property type="match status" value="1"/>
</dbReference>
<proteinExistence type="evidence at transcript level"/>
<protein>
    <recommendedName>
        <fullName evidence="3">Intermembrane lipid transfer protein VPS13A</fullName>
    </recommendedName>
    <alternativeName>
        <fullName evidence="5">Chorea-acanthocytosis protein homolog</fullName>
    </alternativeName>
    <alternativeName>
        <fullName evidence="5">Chorein</fullName>
    </alternativeName>
    <alternativeName>
        <fullName evidence="5">Vacuolar protein sorting-associated protein 13A</fullName>
    </alternativeName>
</protein>
<accession>Q9BGZ0</accession>
<accession>A0A2K5U8A0</accession>
<feature type="chain" id="PRO_0000106278" description="Intermembrane lipid transfer protein VPS13A">
    <location>
        <begin position="1"/>
        <end position="3093"/>
    </location>
</feature>
<feature type="domain" description="Chorein N-terminal" evidence="4">
    <location>
        <begin position="3"/>
        <end position="116"/>
    </location>
</feature>
<feature type="repeat" description="TPR 1" evidence="4">
    <location>
        <begin position="373"/>
        <end position="406"/>
    </location>
</feature>
<feature type="domain" description="SHR-BD" evidence="4">
    <location>
        <begin position="2209"/>
        <end position="2454"/>
    </location>
</feature>
<feature type="repeat" description="TPR 2" evidence="4">
    <location>
        <begin position="2860"/>
        <end position="2898"/>
    </location>
</feature>
<feature type="region of interest" description="Required for lipid droplet localization" evidence="3">
    <location>
        <begin position="2953"/>
        <end position="3027"/>
    </location>
</feature>
<feature type="short sequence motif" description="FFAT" evidence="3">
    <location>
        <begin position="842"/>
        <end position="848"/>
    </location>
</feature>
<feature type="modified residue" description="Phosphoserine" evidence="2">
    <location>
        <position position="839"/>
    </location>
</feature>
<feature type="modified residue" description="Phosphoserine" evidence="3">
    <location>
        <position position="1416"/>
    </location>
</feature>
<name>VP13A_MACFA</name>
<evidence type="ECO:0000250" key="1">
    <source>
        <dbReference type="UniProtKB" id="Q07878"/>
    </source>
</evidence>
<evidence type="ECO:0000250" key="2">
    <source>
        <dbReference type="UniProtKB" id="Q5H8C4"/>
    </source>
</evidence>
<evidence type="ECO:0000250" key="3">
    <source>
        <dbReference type="UniProtKB" id="Q96RL7"/>
    </source>
</evidence>
<evidence type="ECO:0000255" key="4"/>
<evidence type="ECO:0000305" key="5"/>
<organism>
    <name type="scientific">Macaca fascicularis</name>
    <name type="common">Crab-eating macaque</name>
    <name type="synonym">Cynomolgus monkey</name>
    <dbReference type="NCBI Taxonomy" id="9541"/>
    <lineage>
        <taxon>Eukaryota</taxon>
        <taxon>Metazoa</taxon>
        <taxon>Chordata</taxon>
        <taxon>Craniata</taxon>
        <taxon>Vertebrata</taxon>
        <taxon>Euteleostomi</taxon>
        <taxon>Mammalia</taxon>
        <taxon>Eutheria</taxon>
        <taxon>Euarchontoglires</taxon>
        <taxon>Primates</taxon>
        <taxon>Haplorrhini</taxon>
        <taxon>Catarrhini</taxon>
        <taxon>Cercopithecidae</taxon>
        <taxon>Cercopithecinae</taxon>
        <taxon>Macaca</taxon>
    </lineage>
</organism>
<gene>
    <name type="primary">VPS13A</name>
    <name type="synonym">CHAC</name>
    <name type="ORF">QflA-11022</name>
</gene>